<dbReference type="EMBL" id="AJ720609">
    <property type="protein sequence ID" value="CAG32268.1"/>
    <property type="molecule type" value="mRNA"/>
</dbReference>
<dbReference type="RefSeq" id="NP_001026343.1">
    <property type="nucleotide sequence ID" value="NM_001031172.2"/>
</dbReference>
<dbReference type="SMR" id="Q5ZJ25"/>
<dbReference type="FunCoup" id="Q5ZJ25">
    <property type="interactions" value="1356"/>
</dbReference>
<dbReference type="STRING" id="9031.ENSGALP00000039522"/>
<dbReference type="GlyGen" id="Q5ZJ25">
    <property type="glycosylation" value="2 sites"/>
</dbReference>
<dbReference type="PaxDb" id="9031-ENSGALP00000039522"/>
<dbReference type="GeneID" id="422984"/>
<dbReference type="KEGG" id="gga:422984"/>
<dbReference type="CTD" id="738"/>
<dbReference type="VEuPathDB" id="HostDB:geneid_422984"/>
<dbReference type="eggNOG" id="KOG2346">
    <property type="taxonomic scope" value="Eukaryota"/>
</dbReference>
<dbReference type="HOGENOM" id="CLU_020677_0_0_1"/>
<dbReference type="InParanoid" id="Q5ZJ25"/>
<dbReference type="OMA" id="DIICERG"/>
<dbReference type="OrthoDB" id="203678at2759"/>
<dbReference type="PhylomeDB" id="Q5ZJ25"/>
<dbReference type="Reactome" id="R-GGA-6811440">
    <property type="pathway name" value="Retrograde transport at the Trans-Golgi-Network"/>
</dbReference>
<dbReference type="PRO" id="PR:Q5ZJ25"/>
<dbReference type="Proteomes" id="UP000000539">
    <property type="component" value="Chromosome 5"/>
</dbReference>
<dbReference type="Bgee" id="ENSGALG00000004166">
    <property type="expression patterns" value="Expressed in brain and 13 other cell types or tissues"/>
</dbReference>
<dbReference type="GO" id="GO:0005829">
    <property type="term" value="C:cytosol"/>
    <property type="evidence" value="ECO:0007669"/>
    <property type="project" value="GOC"/>
</dbReference>
<dbReference type="GO" id="GO:1990745">
    <property type="term" value="C:EARP complex"/>
    <property type="evidence" value="ECO:0000250"/>
    <property type="project" value="UniProtKB"/>
</dbReference>
<dbReference type="GO" id="GO:0000938">
    <property type="term" value="C:GARP complex"/>
    <property type="evidence" value="ECO:0000250"/>
    <property type="project" value="UniProtKB"/>
</dbReference>
<dbReference type="GO" id="GO:0005794">
    <property type="term" value="C:Golgi apparatus"/>
    <property type="evidence" value="ECO:0000250"/>
    <property type="project" value="UniProtKB"/>
</dbReference>
<dbReference type="GO" id="GO:0016020">
    <property type="term" value="C:membrane"/>
    <property type="evidence" value="ECO:0000318"/>
    <property type="project" value="GO_Central"/>
</dbReference>
<dbReference type="GO" id="GO:0055037">
    <property type="term" value="C:recycling endosome"/>
    <property type="evidence" value="ECO:0000250"/>
    <property type="project" value="UniProtKB"/>
</dbReference>
<dbReference type="GO" id="GO:0032456">
    <property type="term" value="P:endocytic recycling"/>
    <property type="evidence" value="ECO:0000250"/>
    <property type="project" value="UniProtKB"/>
</dbReference>
<dbReference type="GO" id="GO:0007030">
    <property type="term" value="P:Golgi organization"/>
    <property type="evidence" value="ECO:0000318"/>
    <property type="project" value="GO_Central"/>
</dbReference>
<dbReference type="GO" id="GO:0048193">
    <property type="term" value="P:Golgi vesicle transport"/>
    <property type="evidence" value="ECO:0000318"/>
    <property type="project" value="GO_Central"/>
</dbReference>
<dbReference type="GO" id="GO:0006869">
    <property type="term" value="P:lipid transport"/>
    <property type="evidence" value="ECO:0007669"/>
    <property type="project" value="UniProtKB-KW"/>
</dbReference>
<dbReference type="GO" id="GO:0007041">
    <property type="term" value="P:lysosomal transport"/>
    <property type="evidence" value="ECO:0000318"/>
    <property type="project" value="GO_Central"/>
</dbReference>
<dbReference type="GO" id="GO:0015031">
    <property type="term" value="P:protein transport"/>
    <property type="evidence" value="ECO:0007669"/>
    <property type="project" value="UniProtKB-KW"/>
</dbReference>
<dbReference type="GO" id="GO:0042147">
    <property type="term" value="P:retrograde transport, endosome to Golgi"/>
    <property type="evidence" value="ECO:0000318"/>
    <property type="project" value="GO_Central"/>
</dbReference>
<dbReference type="InterPro" id="IPR014812">
    <property type="entry name" value="Vps51"/>
</dbReference>
<dbReference type="PANTHER" id="PTHR15954">
    <property type="entry name" value="VACUOLAR PROTEIN SORTING-ASSOCIATED PROTEIN 51 HOMOLOG"/>
    <property type="match status" value="1"/>
</dbReference>
<dbReference type="PANTHER" id="PTHR15954:SF4">
    <property type="entry name" value="VACUOLAR PROTEIN SORTING-ASSOCIATED PROTEIN 51 HOMOLOG"/>
    <property type="match status" value="1"/>
</dbReference>
<dbReference type="Pfam" id="PF08700">
    <property type="entry name" value="VPS51_Exo84_N"/>
    <property type="match status" value="1"/>
</dbReference>
<organism>
    <name type="scientific">Gallus gallus</name>
    <name type="common">Chicken</name>
    <dbReference type="NCBI Taxonomy" id="9031"/>
    <lineage>
        <taxon>Eukaryota</taxon>
        <taxon>Metazoa</taxon>
        <taxon>Chordata</taxon>
        <taxon>Craniata</taxon>
        <taxon>Vertebrata</taxon>
        <taxon>Euteleostomi</taxon>
        <taxon>Archelosauria</taxon>
        <taxon>Archosauria</taxon>
        <taxon>Dinosauria</taxon>
        <taxon>Saurischia</taxon>
        <taxon>Theropoda</taxon>
        <taxon>Coelurosauria</taxon>
        <taxon>Aves</taxon>
        <taxon>Neognathae</taxon>
        <taxon>Galloanserae</taxon>
        <taxon>Galliformes</taxon>
        <taxon>Phasianidae</taxon>
        <taxon>Phasianinae</taxon>
        <taxon>Gallus</taxon>
    </lineage>
</organism>
<feature type="chain" id="PRO_0000358914" description="Vacuolar protein sorting-associated protein 51 homolog">
    <location>
        <begin position="1"/>
        <end position="787"/>
    </location>
</feature>
<feature type="region of interest" description="Disordered" evidence="3">
    <location>
        <begin position="1"/>
        <end position="39"/>
    </location>
</feature>
<feature type="coiled-coil region" evidence="2">
    <location>
        <begin position="111"/>
        <end position="142"/>
    </location>
</feature>
<feature type="coiled-coil region" evidence="2">
    <location>
        <begin position="265"/>
        <end position="287"/>
    </location>
</feature>
<feature type="compositionally biased region" description="Low complexity" evidence="3">
    <location>
        <begin position="1"/>
        <end position="10"/>
    </location>
</feature>
<feature type="compositionally biased region" description="Gly residues" evidence="3">
    <location>
        <begin position="11"/>
        <end position="27"/>
    </location>
</feature>
<keyword id="KW-0175">Coiled coil</keyword>
<keyword id="KW-0967">Endosome</keyword>
<keyword id="KW-0333">Golgi apparatus</keyword>
<keyword id="KW-0445">Lipid transport</keyword>
<keyword id="KW-0653">Protein transport</keyword>
<keyword id="KW-1185">Reference proteome</keyword>
<keyword id="KW-0813">Transport</keyword>
<comment type="function">
    <text evidence="1">Involved in retrograde transport from early and late endosomes to the late Golgi. The GARP complex is required for the maintenance of protein retrieval from endosomes to the TGN, acid hydrolase sorting, lysosome function, endosomal cholesterol traffic and autophagy. Acts as a component of the EARP complex that is involved in endocytic recycling.</text>
</comment>
<comment type="subunit">
    <text evidence="1">Component of the Golgi-associated retrograde protein (GARP) complex Component of the endosome-associated retrograde protein (EARP) complex.</text>
</comment>
<comment type="subcellular location">
    <subcellularLocation>
        <location evidence="1">Golgi apparatus</location>
        <location evidence="1">trans-Golgi network</location>
    </subcellularLocation>
    <subcellularLocation>
        <location evidence="1">Recycling endosome</location>
    </subcellularLocation>
    <text evidence="1">Localizes to the trans-Golgi network as part of the GARP complex, while it localizes to recycling endosomes as part of the EARP complex.</text>
</comment>
<comment type="similarity">
    <text evidence="4">Belongs to the VPS51 family.</text>
</comment>
<gene>
    <name type="primary">VPS51</name>
    <name type="synonym">FFR</name>
    <name type="ORF">RCJMB04_21i2</name>
</gene>
<proteinExistence type="evidence at transcript level"/>
<accession>Q5ZJ25</accession>
<sequence length="787" mass="86059">MAEVEAAGSGTETGGGSESGNATGSGSGWRRPHGPLQRYYGPSAAEAAEATPDPADINGPHFDPEVFLTKVRSECRLGELLSREATLGREIRALDSDMQTLLYENYNKFISATDTIRKMKVDFRRMEAEMDDLASNMAAISASSARVSAALQDRHRRGAQLAGVQALLRKLQSLVEVPGRLRRWAAPGADPARALHCYARARAVLRHYRHLPSFRAIEDESHSIMAELAQRLRARLRDDTLDPKELTECVEMLLQLEEPPEELCEEFLSQAGARLEAELAALEAELPPSDPSGTASTPPPASDILDFVDRGSSAFVSNLCLLAASYRSLFEGRPGSGDGRLEAFASTLTTRYFELLERRLALERGLGDTSLLVRALDRFHRRLRALLELLPAAGAEAGAALVARAARERVARYLRALQTFFLGCLGDVRQALAAPRPPGKDGPGLPDLLATLSSSVLGQLKAVLAYVQLFTARDVAFASLPYFKGEFCVEAVREGLVVAFVRWLCRTARGFADSPAERGAPAAPPALLLLLARLCLDYEATTISYILTLTDEQFPPEDTGPAVTPGPALCAEARGAAQRLLDHYVQVQGAAVAQMLRKSVETRDWLGTVEPRNVRAVMKRVVEDITAIDVQVGQLFEEGVRRAQSSDSSRRAFSVYSSSRAPGRYAPSYTPSAPMDTHLLSNIQKLFSERIDIFSPVEFNKVSVLTGIIKISLKTLLECVRLRTLGRFGLQQVQVDGHYLQLYLWRFAADERVVQGLLDEVAASAAHRCLDPVPMEHSVVELICERG</sequence>
<name>VPS51_CHICK</name>
<reference key="1">
    <citation type="journal article" date="2005" name="Genome Biol.">
        <title>Full-length cDNAs from chicken bursal lymphocytes to facilitate gene function analysis.</title>
        <authorList>
            <person name="Caldwell R.B."/>
            <person name="Kierzek A.M."/>
            <person name="Arakawa H."/>
            <person name="Bezzubov Y."/>
            <person name="Zaim J."/>
            <person name="Fiedler P."/>
            <person name="Kutter S."/>
            <person name="Blagodatski A."/>
            <person name="Kostovska D."/>
            <person name="Koter M."/>
            <person name="Plachy J."/>
            <person name="Carninci P."/>
            <person name="Hayashizaki Y."/>
            <person name="Buerstedde J.-M."/>
        </authorList>
    </citation>
    <scope>NUCLEOTIDE SEQUENCE [LARGE SCALE MRNA]</scope>
    <source>
        <strain>CB</strain>
        <tissue>Bursa of Fabricius</tissue>
    </source>
</reference>
<protein>
    <recommendedName>
        <fullName>Vacuolar protein sorting-associated protein 51 homolog</fullName>
    </recommendedName>
    <alternativeName>
        <fullName>Protein fat-free homolog</fullName>
    </alternativeName>
</protein>
<evidence type="ECO:0000250" key="1">
    <source>
        <dbReference type="UniProtKB" id="Q9UID3"/>
    </source>
</evidence>
<evidence type="ECO:0000255" key="2"/>
<evidence type="ECO:0000256" key="3">
    <source>
        <dbReference type="SAM" id="MobiDB-lite"/>
    </source>
</evidence>
<evidence type="ECO:0000305" key="4"/>